<keyword id="KW-0030">Aminoacyl-tRNA synthetase</keyword>
<keyword id="KW-0067">ATP-binding</keyword>
<keyword id="KW-0963">Cytoplasm</keyword>
<keyword id="KW-0436">Ligase</keyword>
<keyword id="KW-0547">Nucleotide-binding</keyword>
<keyword id="KW-0648">Protein biosynthesis</keyword>
<accession>Q87RL6</accession>
<reference key="1">
    <citation type="journal article" date="2003" name="Lancet">
        <title>Genome sequence of Vibrio parahaemolyticus: a pathogenic mechanism distinct from that of V. cholerae.</title>
        <authorList>
            <person name="Makino K."/>
            <person name="Oshima K."/>
            <person name="Kurokawa K."/>
            <person name="Yokoyama K."/>
            <person name="Uda T."/>
            <person name="Tagomori K."/>
            <person name="Iijima Y."/>
            <person name="Najima M."/>
            <person name="Nakano M."/>
            <person name="Yamashita A."/>
            <person name="Kubota Y."/>
            <person name="Kimura S."/>
            <person name="Yasunaga T."/>
            <person name="Honda T."/>
            <person name="Shinagawa H."/>
            <person name="Hattori M."/>
            <person name="Iida T."/>
        </authorList>
    </citation>
    <scope>NUCLEOTIDE SEQUENCE [LARGE SCALE GENOMIC DNA]</scope>
    <source>
        <strain>RIMD 2210633</strain>
    </source>
</reference>
<sequence length="474" mass="53453">MTVKTRFAPSPTGYLHVGGARTALYSWLYAKNQGGEFVLRIEDTDLERNSQEAVDAILEGMEWLGLEWDEGPYYQTQRFDRYNEMVDKLLAEDKAYKCYASKELLDEIRAEQEANKEMPRYDANHPKIKAANEAAKDGDPCVIRFRNPKEGSVVFEDQIRGRIEIRNDQMDDLIIRRTDGSPTYNFCVVVDDWDMGITHVVRGEDHINNTPRQINIYEALGAPVPTFAHCAMILGDDGAKLSKRHGAVSVMQYRDMGYLPAALNNYLVRLGWSHGDQEIFSQEEMINLFSLNAVSKSASAFNTDKLQWLNNHYIKNSDPAYVAEHLQWHLDQQKLDVTNGPAITDVIKLVGERCHTLVELAEQIRYFYEDFSEFEAGAAKKHLRGVAKEPLEVALAKVEAITEWTTENLHQMIADVCAELEIGMGKIGMPLRVAVTGGGQSPSVDAVMALIGKERCVARIKMALEFIAEREANA</sequence>
<gene>
    <name evidence="1" type="primary">gltX</name>
    <name type="ordered locus">VP0762</name>
</gene>
<protein>
    <recommendedName>
        <fullName evidence="1">Glutamate--tRNA ligase</fullName>
        <ecNumber evidence="1">6.1.1.17</ecNumber>
    </recommendedName>
    <alternativeName>
        <fullName evidence="1">Glutamyl-tRNA synthetase</fullName>
        <shortName evidence="1">GluRS</shortName>
    </alternativeName>
</protein>
<dbReference type="EC" id="6.1.1.17" evidence="1"/>
<dbReference type="EMBL" id="BA000031">
    <property type="protein sequence ID" value="BAC59025.1"/>
    <property type="molecule type" value="Genomic_DNA"/>
</dbReference>
<dbReference type="RefSeq" id="NP_797141.1">
    <property type="nucleotide sequence ID" value="NC_004603.1"/>
</dbReference>
<dbReference type="RefSeq" id="WP_005482241.1">
    <property type="nucleotide sequence ID" value="NC_004603.1"/>
</dbReference>
<dbReference type="SMR" id="Q87RL6"/>
<dbReference type="GeneID" id="1188258"/>
<dbReference type="KEGG" id="vpa:VP0762"/>
<dbReference type="PATRIC" id="fig|223926.6.peg.728"/>
<dbReference type="eggNOG" id="COG0008">
    <property type="taxonomic scope" value="Bacteria"/>
</dbReference>
<dbReference type="HOGENOM" id="CLU_015768_6_3_6"/>
<dbReference type="Proteomes" id="UP000002493">
    <property type="component" value="Chromosome 1"/>
</dbReference>
<dbReference type="GO" id="GO:0005829">
    <property type="term" value="C:cytosol"/>
    <property type="evidence" value="ECO:0007669"/>
    <property type="project" value="TreeGrafter"/>
</dbReference>
<dbReference type="GO" id="GO:0005524">
    <property type="term" value="F:ATP binding"/>
    <property type="evidence" value="ECO:0007669"/>
    <property type="project" value="UniProtKB-UniRule"/>
</dbReference>
<dbReference type="GO" id="GO:0004818">
    <property type="term" value="F:glutamate-tRNA ligase activity"/>
    <property type="evidence" value="ECO:0007669"/>
    <property type="project" value="UniProtKB-UniRule"/>
</dbReference>
<dbReference type="GO" id="GO:0000049">
    <property type="term" value="F:tRNA binding"/>
    <property type="evidence" value="ECO:0007669"/>
    <property type="project" value="InterPro"/>
</dbReference>
<dbReference type="GO" id="GO:0008270">
    <property type="term" value="F:zinc ion binding"/>
    <property type="evidence" value="ECO:0007669"/>
    <property type="project" value="InterPro"/>
</dbReference>
<dbReference type="GO" id="GO:0006424">
    <property type="term" value="P:glutamyl-tRNA aminoacylation"/>
    <property type="evidence" value="ECO:0007669"/>
    <property type="project" value="UniProtKB-UniRule"/>
</dbReference>
<dbReference type="CDD" id="cd00808">
    <property type="entry name" value="GluRS_core"/>
    <property type="match status" value="1"/>
</dbReference>
<dbReference type="FunFam" id="1.10.10.350:FF:000001">
    <property type="entry name" value="Glutamate--tRNA ligase"/>
    <property type="match status" value="1"/>
</dbReference>
<dbReference type="FunFam" id="3.40.50.620:FF:000007">
    <property type="entry name" value="Glutamate--tRNA ligase"/>
    <property type="match status" value="1"/>
</dbReference>
<dbReference type="Gene3D" id="1.10.10.350">
    <property type="match status" value="1"/>
</dbReference>
<dbReference type="Gene3D" id="3.40.50.620">
    <property type="entry name" value="HUPs"/>
    <property type="match status" value="1"/>
</dbReference>
<dbReference type="HAMAP" id="MF_00022">
    <property type="entry name" value="Glu_tRNA_synth_type1"/>
    <property type="match status" value="1"/>
</dbReference>
<dbReference type="InterPro" id="IPR045462">
    <property type="entry name" value="aa-tRNA-synth_I_cd-bd"/>
</dbReference>
<dbReference type="InterPro" id="IPR020751">
    <property type="entry name" value="aa-tRNA-synth_I_codon-bd_sub2"/>
</dbReference>
<dbReference type="InterPro" id="IPR001412">
    <property type="entry name" value="aa-tRNA-synth_I_CS"/>
</dbReference>
<dbReference type="InterPro" id="IPR008925">
    <property type="entry name" value="aa_tRNA-synth_I_cd-bd_sf"/>
</dbReference>
<dbReference type="InterPro" id="IPR004527">
    <property type="entry name" value="Glu-tRNA-ligase_bac/mito"/>
</dbReference>
<dbReference type="InterPro" id="IPR000924">
    <property type="entry name" value="Glu/Gln-tRNA-synth"/>
</dbReference>
<dbReference type="InterPro" id="IPR020058">
    <property type="entry name" value="Glu/Gln-tRNA-synth_Ib_cat-dom"/>
</dbReference>
<dbReference type="InterPro" id="IPR049940">
    <property type="entry name" value="GluQ/Sye"/>
</dbReference>
<dbReference type="InterPro" id="IPR033910">
    <property type="entry name" value="GluRS_core"/>
</dbReference>
<dbReference type="InterPro" id="IPR014729">
    <property type="entry name" value="Rossmann-like_a/b/a_fold"/>
</dbReference>
<dbReference type="NCBIfam" id="TIGR00464">
    <property type="entry name" value="gltX_bact"/>
    <property type="match status" value="1"/>
</dbReference>
<dbReference type="PANTHER" id="PTHR43311">
    <property type="entry name" value="GLUTAMATE--TRNA LIGASE"/>
    <property type="match status" value="1"/>
</dbReference>
<dbReference type="PANTHER" id="PTHR43311:SF2">
    <property type="entry name" value="GLUTAMATE--TRNA LIGASE, MITOCHONDRIAL-RELATED"/>
    <property type="match status" value="1"/>
</dbReference>
<dbReference type="Pfam" id="PF19269">
    <property type="entry name" value="Anticodon_2"/>
    <property type="match status" value="1"/>
</dbReference>
<dbReference type="Pfam" id="PF00749">
    <property type="entry name" value="tRNA-synt_1c"/>
    <property type="match status" value="1"/>
</dbReference>
<dbReference type="PRINTS" id="PR00987">
    <property type="entry name" value="TRNASYNTHGLU"/>
</dbReference>
<dbReference type="SUPFAM" id="SSF48163">
    <property type="entry name" value="An anticodon-binding domain of class I aminoacyl-tRNA synthetases"/>
    <property type="match status" value="1"/>
</dbReference>
<dbReference type="SUPFAM" id="SSF52374">
    <property type="entry name" value="Nucleotidylyl transferase"/>
    <property type="match status" value="1"/>
</dbReference>
<dbReference type="PROSITE" id="PS00178">
    <property type="entry name" value="AA_TRNA_LIGASE_I"/>
    <property type="match status" value="1"/>
</dbReference>
<evidence type="ECO:0000255" key="1">
    <source>
        <dbReference type="HAMAP-Rule" id="MF_00022"/>
    </source>
</evidence>
<name>SYE_VIBPA</name>
<feature type="chain" id="PRO_0000119693" description="Glutamate--tRNA ligase">
    <location>
        <begin position="1"/>
        <end position="474"/>
    </location>
</feature>
<feature type="short sequence motif" description="'HIGH' region" evidence="1">
    <location>
        <begin position="9"/>
        <end position="19"/>
    </location>
</feature>
<feature type="short sequence motif" description="'KMSKS' region" evidence="1">
    <location>
        <begin position="240"/>
        <end position="244"/>
    </location>
</feature>
<feature type="binding site" evidence="1">
    <location>
        <position position="243"/>
    </location>
    <ligand>
        <name>ATP</name>
        <dbReference type="ChEBI" id="CHEBI:30616"/>
    </ligand>
</feature>
<proteinExistence type="inferred from homology"/>
<organism>
    <name type="scientific">Vibrio parahaemolyticus serotype O3:K6 (strain RIMD 2210633)</name>
    <dbReference type="NCBI Taxonomy" id="223926"/>
    <lineage>
        <taxon>Bacteria</taxon>
        <taxon>Pseudomonadati</taxon>
        <taxon>Pseudomonadota</taxon>
        <taxon>Gammaproteobacteria</taxon>
        <taxon>Vibrionales</taxon>
        <taxon>Vibrionaceae</taxon>
        <taxon>Vibrio</taxon>
    </lineage>
</organism>
<comment type="function">
    <text evidence="1">Catalyzes the attachment of glutamate to tRNA(Glu) in a two-step reaction: glutamate is first activated by ATP to form Glu-AMP and then transferred to the acceptor end of tRNA(Glu).</text>
</comment>
<comment type="catalytic activity">
    <reaction evidence="1">
        <text>tRNA(Glu) + L-glutamate + ATP = L-glutamyl-tRNA(Glu) + AMP + diphosphate</text>
        <dbReference type="Rhea" id="RHEA:23540"/>
        <dbReference type="Rhea" id="RHEA-COMP:9663"/>
        <dbReference type="Rhea" id="RHEA-COMP:9680"/>
        <dbReference type="ChEBI" id="CHEBI:29985"/>
        <dbReference type="ChEBI" id="CHEBI:30616"/>
        <dbReference type="ChEBI" id="CHEBI:33019"/>
        <dbReference type="ChEBI" id="CHEBI:78442"/>
        <dbReference type="ChEBI" id="CHEBI:78520"/>
        <dbReference type="ChEBI" id="CHEBI:456215"/>
        <dbReference type="EC" id="6.1.1.17"/>
    </reaction>
</comment>
<comment type="subunit">
    <text evidence="1">Monomer.</text>
</comment>
<comment type="subcellular location">
    <subcellularLocation>
        <location evidence="1">Cytoplasm</location>
    </subcellularLocation>
</comment>
<comment type="similarity">
    <text evidence="1">Belongs to the class-I aminoacyl-tRNA synthetase family. Glutamate--tRNA ligase type 1 subfamily.</text>
</comment>